<proteinExistence type="inferred from homology"/>
<organism>
    <name type="scientific">Sulfurimonas denitrificans (strain ATCC 33889 / DSM 1251)</name>
    <name type="common">Thiomicrospira denitrificans (strain ATCC 33889 / DSM 1251)</name>
    <dbReference type="NCBI Taxonomy" id="326298"/>
    <lineage>
        <taxon>Bacteria</taxon>
        <taxon>Pseudomonadati</taxon>
        <taxon>Campylobacterota</taxon>
        <taxon>Epsilonproteobacteria</taxon>
        <taxon>Campylobacterales</taxon>
        <taxon>Sulfurimonadaceae</taxon>
        <taxon>Sulfurimonas</taxon>
    </lineage>
</organism>
<feature type="chain" id="PRO_0000350476" description="Dual-specificity RNA methyltransferase RlmN">
    <location>
        <begin position="1"/>
        <end position="356"/>
    </location>
</feature>
<feature type="domain" description="Radical SAM core" evidence="2">
    <location>
        <begin position="106"/>
        <end position="339"/>
    </location>
</feature>
<feature type="active site" description="Proton acceptor" evidence="1">
    <location>
        <position position="87"/>
    </location>
</feature>
<feature type="active site" description="S-methylcysteine intermediate" evidence="1">
    <location>
        <position position="344"/>
    </location>
</feature>
<feature type="binding site" evidence="1">
    <location>
        <position position="120"/>
    </location>
    <ligand>
        <name>[4Fe-4S] cluster</name>
        <dbReference type="ChEBI" id="CHEBI:49883"/>
        <note>4Fe-4S-S-AdoMet</note>
    </ligand>
</feature>
<feature type="binding site" evidence="1">
    <location>
        <position position="124"/>
    </location>
    <ligand>
        <name>[4Fe-4S] cluster</name>
        <dbReference type="ChEBI" id="CHEBI:49883"/>
        <note>4Fe-4S-S-AdoMet</note>
    </ligand>
</feature>
<feature type="binding site" evidence="1">
    <location>
        <position position="127"/>
    </location>
    <ligand>
        <name>[4Fe-4S] cluster</name>
        <dbReference type="ChEBI" id="CHEBI:49883"/>
        <note>4Fe-4S-S-AdoMet</note>
    </ligand>
</feature>
<feature type="binding site" evidence="1">
    <location>
        <begin position="170"/>
        <end position="171"/>
    </location>
    <ligand>
        <name>S-adenosyl-L-methionine</name>
        <dbReference type="ChEBI" id="CHEBI:59789"/>
    </ligand>
</feature>
<feature type="binding site" evidence="1">
    <location>
        <position position="202"/>
    </location>
    <ligand>
        <name>S-adenosyl-L-methionine</name>
        <dbReference type="ChEBI" id="CHEBI:59789"/>
    </ligand>
</feature>
<feature type="binding site" evidence="1">
    <location>
        <begin position="225"/>
        <end position="227"/>
    </location>
    <ligand>
        <name>S-adenosyl-L-methionine</name>
        <dbReference type="ChEBI" id="CHEBI:59789"/>
    </ligand>
</feature>
<feature type="binding site" evidence="1">
    <location>
        <position position="301"/>
    </location>
    <ligand>
        <name>S-adenosyl-L-methionine</name>
        <dbReference type="ChEBI" id="CHEBI:59789"/>
    </ligand>
</feature>
<feature type="disulfide bond" description="(transient)" evidence="1">
    <location>
        <begin position="113"/>
        <end position="344"/>
    </location>
</feature>
<evidence type="ECO:0000255" key="1">
    <source>
        <dbReference type="HAMAP-Rule" id="MF_01849"/>
    </source>
</evidence>
<evidence type="ECO:0000255" key="2">
    <source>
        <dbReference type="PROSITE-ProRule" id="PRU01266"/>
    </source>
</evidence>
<reference key="1">
    <citation type="journal article" date="2008" name="Appl. Environ. Microbiol.">
        <title>Genome of the epsilonproteobacterial chemolithoautotroph Sulfurimonas denitrificans.</title>
        <authorList>
            <person name="Sievert S.M."/>
            <person name="Scott K.M."/>
            <person name="Klotz M.G."/>
            <person name="Chain P.S.G."/>
            <person name="Hauser L.J."/>
            <person name="Hemp J."/>
            <person name="Huegler M."/>
            <person name="Land M."/>
            <person name="Lapidus A."/>
            <person name="Larimer F.W."/>
            <person name="Lucas S."/>
            <person name="Malfatti S.A."/>
            <person name="Meyer F."/>
            <person name="Paulsen I.T."/>
            <person name="Ren Q."/>
            <person name="Simon J."/>
            <person name="Bailey K."/>
            <person name="Diaz E."/>
            <person name="Fitzpatrick K.A."/>
            <person name="Glover B."/>
            <person name="Gwatney N."/>
            <person name="Korajkic A."/>
            <person name="Long A."/>
            <person name="Mobberley J.M."/>
            <person name="Pantry S.N."/>
            <person name="Pazder G."/>
            <person name="Peterson S."/>
            <person name="Quintanilla J.D."/>
            <person name="Sprinkle R."/>
            <person name="Stephens J."/>
            <person name="Thomas P."/>
            <person name="Vaughn R."/>
            <person name="Weber M.J."/>
            <person name="Wooten L.L."/>
        </authorList>
    </citation>
    <scope>NUCLEOTIDE SEQUENCE [LARGE SCALE GENOMIC DNA]</scope>
    <source>
        <strain>ATCC 33889 / DSM 1251</strain>
    </source>
</reference>
<keyword id="KW-0004">4Fe-4S</keyword>
<keyword id="KW-0963">Cytoplasm</keyword>
<keyword id="KW-1015">Disulfide bond</keyword>
<keyword id="KW-0408">Iron</keyword>
<keyword id="KW-0411">Iron-sulfur</keyword>
<keyword id="KW-0479">Metal-binding</keyword>
<keyword id="KW-0489">Methyltransferase</keyword>
<keyword id="KW-1185">Reference proteome</keyword>
<keyword id="KW-0698">rRNA processing</keyword>
<keyword id="KW-0949">S-adenosyl-L-methionine</keyword>
<keyword id="KW-0808">Transferase</keyword>
<keyword id="KW-0819">tRNA processing</keyword>
<gene>
    <name evidence="1" type="primary">rlmN</name>
    <name type="ordered locus">Suden_2093</name>
</gene>
<name>RLMN_SULDN</name>
<protein>
    <recommendedName>
        <fullName evidence="1">Dual-specificity RNA methyltransferase RlmN</fullName>
        <ecNumber evidence="1">2.1.1.192</ecNumber>
    </recommendedName>
    <alternativeName>
        <fullName evidence="1">23S rRNA (adenine(2503)-C(2))-methyltransferase</fullName>
    </alternativeName>
    <alternativeName>
        <fullName evidence="1">23S rRNA m2A2503 methyltransferase</fullName>
    </alternativeName>
    <alternativeName>
        <fullName evidence="1">Ribosomal RNA large subunit methyltransferase N</fullName>
    </alternativeName>
    <alternativeName>
        <fullName evidence="1">tRNA (adenine(37)-C(2))-methyltransferase</fullName>
    </alternativeName>
    <alternativeName>
        <fullName evidence="1">tRNA m2A37 methyltransferase</fullName>
    </alternativeName>
</protein>
<accession>Q30NR4</accession>
<comment type="function">
    <text evidence="1">Specifically methylates position 2 of adenine 2503 in 23S rRNA and position 2 of adenine 37 in tRNAs. m2A2503 modification seems to play a crucial role in the proofreading step occurring at the peptidyl transferase center and thus would serve to optimize ribosomal fidelity.</text>
</comment>
<comment type="catalytic activity">
    <reaction evidence="1">
        <text>adenosine(2503) in 23S rRNA + 2 reduced [2Fe-2S]-[ferredoxin] + 2 S-adenosyl-L-methionine = 2-methyladenosine(2503) in 23S rRNA + 5'-deoxyadenosine + L-methionine + 2 oxidized [2Fe-2S]-[ferredoxin] + S-adenosyl-L-homocysteine</text>
        <dbReference type="Rhea" id="RHEA:42916"/>
        <dbReference type="Rhea" id="RHEA-COMP:10000"/>
        <dbReference type="Rhea" id="RHEA-COMP:10001"/>
        <dbReference type="Rhea" id="RHEA-COMP:10152"/>
        <dbReference type="Rhea" id="RHEA-COMP:10282"/>
        <dbReference type="ChEBI" id="CHEBI:17319"/>
        <dbReference type="ChEBI" id="CHEBI:33737"/>
        <dbReference type="ChEBI" id="CHEBI:33738"/>
        <dbReference type="ChEBI" id="CHEBI:57844"/>
        <dbReference type="ChEBI" id="CHEBI:57856"/>
        <dbReference type="ChEBI" id="CHEBI:59789"/>
        <dbReference type="ChEBI" id="CHEBI:74411"/>
        <dbReference type="ChEBI" id="CHEBI:74497"/>
        <dbReference type="EC" id="2.1.1.192"/>
    </reaction>
</comment>
<comment type="catalytic activity">
    <reaction evidence="1">
        <text>adenosine(37) in tRNA + 2 reduced [2Fe-2S]-[ferredoxin] + 2 S-adenosyl-L-methionine = 2-methyladenosine(37) in tRNA + 5'-deoxyadenosine + L-methionine + 2 oxidized [2Fe-2S]-[ferredoxin] + S-adenosyl-L-homocysteine</text>
        <dbReference type="Rhea" id="RHEA:43332"/>
        <dbReference type="Rhea" id="RHEA-COMP:10000"/>
        <dbReference type="Rhea" id="RHEA-COMP:10001"/>
        <dbReference type="Rhea" id="RHEA-COMP:10162"/>
        <dbReference type="Rhea" id="RHEA-COMP:10485"/>
        <dbReference type="ChEBI" id="CHEBI:17319"/>
        <dbReference type="ChEBI" id="CHEBI:33737"/>
        <dbReference type="ChEBI" id="CHEBI:33738"/>
        <dbReference type="ChEBI" id="CHEBI:57844"/>
        <dbReference type="ChEBI" id="CHEBI:57856"/>
        <dbReference type="ChEBI" id="CHEBI:59789"/>
        <dbReference type="ChEBI" id="CHEBI:74411"/>
        <dbReference type="ChEBI" id="CHEBI:74497"/>
        <dbReference type="EC" id="2.1.1.192"/>
    </reaction>
</comment>
<comment type="cofactor">
    <cofactor evidence="1">
        <name>[4Fe-4S] cluster</name>
        <dbReference type="ChEBI" id="CHEBI:49883"/>
    </cofactor>
    <text evidence="1">Binds 1 [4Fe-4S] cluster. The cluster is coordinated with 3 cysteines and an exchangeable S-adenosyl-L-methionine.</text>
</comment>
<comment type="subcellular location">
    <subcellularLocation>
        <location evidence="1">Cytoplasm</location>
    </subcellularLocation>
</comment>
<comment type="miscellaneous">
    <text evidence="1">Reaction proceeds by a ping-pong mechanism involving intermediate methylation of a conserved cysteine residue.</text>
</comment>
<comment type="similarity">
    <text evidence="1">Belongs to the radical SAM superfamily. RlmN family.</text>
</comment>
<sequence>MKPSLLDFRLKELQANIKPSFRAKQIYGWLYHNYAQSFDDMKNIPQQLKDELAKSYVVNLLKIVKKELSNDGTIKYLFELQDGKTIETVWLKMKDEQIDEEGCVTQEAKYTICVSTQVGCKVGCAFCLTAKGGFTRDLTAGEIVAQVVALKKDNDHKHNRMINIVYMGMGEPLDNLDNLSRAIEIFKEEDGLCISGKRQTVSTSGLSNKIDRLGEMDLGVHIAISLHAVDDELRTELIPMNKAHNISSIIEAVKRFPIDTRKRVMFEYLVIKNKNDDLGSAKKLVKLLSGIKAKVNLIYFNPYPDTPYERPQKSDMIAFQEYLINHGLLCTIRDSKGIDISAACGQLKEKTQSELQ</sequence>
<dbReference type="EC" id="2.1.1.192" evidence="1"/>
<dbReference type="EMBL" id="CP000153">
    <property type="protein sequence ID" value="ABB45367.1"/>
    <property type="molecule type" value="Genomic_DNA"/>
</dbReference>
<dbReference type="RefSeq" id="WP_011373707.1">
    <property type="nucleotide sequence ID" value="NC_007575.1"/>
</dbReference>
<dbReference type="SMR" id="Q30NR4"/>
<dbReference type="STRING" id="326298.Suden_2093"/>
<dbReference type="KEGG" id="tdn:Suden_2093"/>
<dbReference type="eggNOG" id="COG0820">
    <property type="taxonomic scope" value="Bacteria"/>
</dbReference>
<dbReference type="HOGENOM" id="CLU_029101_2_0_7"/>
<dbReference type="OrthoDB" id="9793973at2"/>
<dbReference type="Proteomes" id="UP000002714">
    <property type="component" value="Chromosome"/>
</dbReference>
<dbReference type="GO" id="GO:0005737">
    <property type="term" value="C:cytoplasm"/>
    <property type="evidence" value="ECO:0007669"/>
    <property type="project" value="UniProtKB-SubCell"/>
</dbReference>
<dbReference type="GO" id="GO:0051539">
    <property type="term" value="F:4 iron, 4 sulfur cluster binding"/>
    <property type="evidence" value="ECO:0007669"/>
    <property type="project" value="UniProtKB-UniRule"/>
</dbReference>
<dbReference type="GO" id="GO:0046872">
    <property type="term" value="F:metal ion binding"/>
    <property type="evidence" value="ECO:0007669"/>
    <property type="project" value="UniProtKB-KW"/>
</dbReference>
<dbReference type="GO" id="GO:0070040">
    <property type="term" value="F:rRNA (adenine(2503)-C2-)-methyltransferase activity"/>
    <property type="evidence" value="ECO:0007669"/>
    <property type="project" value="UniProtKB-UniRule"/>
</dbReference>
<dbReference type="GO" id="GO:0019843">
    <property type="term" value="F:rRNA binding"/>
    <property type="evidence" value="ECO:0007669"/>
    <property type="project" value="UniProtKB-UniRule"/>
</dbReference>
<dbReference type="GO" id="GO:0002935">
    <property type="term" value="F:tRNA (adenine(37)-C2)-methyltransferase activity"/>
    <property type="evidence" value="ECO:0007669"/>
    <property type="project" value="UniProtKB-UniRule"/>
</dbReference>
<dbReference type="GO" id="GO:0000049">
    <property type="term" value="F:tRNA binding"/>
    <property type="evidence" value="ECO:0007669"/>
    <property type="project" value="UniProtKB-UniRule"/>
</dbReference>
<dbReference type="GO" id="GO:0070475">
    <property type="term" value="P:rRNA base methylation"/>
    <property type="evidence" value="ECO:0007669"/>
    <property type="project" value="UniProtKB-UniRule"/>
</dbReference>
<dbReference type="GO" id="GO:0030488">
    <property type="term" value="P:tRNA methylation"/>
    <property type="evidence" value="ECO:0007669"/>
    <property type="project" value="UniProtKB-UniRule"/>
</dbReference>
<dbReference type="CDD" id="cd01335">
    <property type="entry name" value="Radical_SAM"/>
    <property type="match status" value="1"/>
</dbReference>
<dbReference type="FunFam" id="3.20.20.70:FF:000014">
    <property type="entry name" value="Probable dual-specificity RNA methyltransferase RlmN"/>
    <property type="match status" value="1"/>
</dbReference>
<dbReference type="Gene3D" id="1.10.150.530">
    <property type="match status" value="1"/>
</dbReference>
<dbReference type="Gene3D" id="3.20.20.70">
    <property type="entry name" value="Aldolase class I"/>
    <property type="match status" value="1"/>
</dbReference>
<dbReference type="HAMAP" id="MF_01849">
    <property type="entry name" value="RNA_methyltr_RlmN"/>
    <property type="match status" value="1"/>
</dbReference>
<dbReference type="InterPro" id="IPR013785">
    <property type="entry name" value="Aldolase_TIM"/>
</dbReference>
<dbReference type="InterPro" id="IPR006638">
    <property type="entry name" value="Elp3/MiaA/NifB-like_rSAM"/>
</dbReference>
<dbReference type="InterPro" id="IPR040072">
    <property type="entry name" value="Methyltransferase_A"/>
</dbReference>
<dbReference type="InterPro" id="IPR048641">
    <property type="entry name" value="RlmN_N"/>
</dbReference>
<dbReference type="InterPro" id="IPR027492">
    <property type="entry name" value="RNA_MTrfase_RlmN"/>
</dbReference>
<dbReference type="InterPro" id="IPR004383">
    <property type="entry name" value="rRNA_lsu_MTrfase_RlmN/Cfr"/>
</dbReference>
<dbReference type="InterPro" id="IPR007197">
    <property type="entry name" value="rSAM"/>
</dbReference>
<dbReference type="NCBIfam" id="TIGR00048">
    <property type="entry name" value="rRNA_mod_RlmN"/>
    <property type="match status" value="1"/>
</dbReference>
<dbReference type="PANTHER" id="PTHR30544">
    <property type="entry name" value="23S RRNA METHYLTRANSFERASE"/>
    <property type="match status" value="1"/>
</dbReference>
<dbReference type="PANTHER" id="PTHR30544:SF5">
    <property type="entry name" value="RADICAL SAM CORE DOMAIN-CONTAINING PROTEIN"/>
    <property type="match status" value="1"/>
</dbReference>
<dbReference type="Pfam" id="PF04055">
    <property type="entry name" value="Radical_SAM"/>
    <property type="match status" value="1"/>
</dbReference>
<dbReference type="Pfam" id="PF21016">
    <property type="entry name" value="RlmN_N"/>
    <property type="match status" value="1"/>
</dbReference>
<dbReference type="PIRSF" id="PIRSF006004">
    <property type="entry name" value="CHP00048"/>
    <property type="match status" value="1"/>
</dbReference>
<dbReference type="SFLD" id="SFLDF00275">
    <property type="entry name" value="adenosine_C2_methyltransferase"/>
    <property type="match status" value="1"/>
</dbReference>
<dbReference type="SFLD" id="SFLDG01062">
    <property type="entry name" value="methyltransferase_(Class_A)"/>
    <property type="match status" value="1"/>
</dbReference>
<dbReference type="SMART" id="SM00729">
    <property type="entry name" value="Elp3"/>
    <property type="match status" value="1"/>
</dbReference>
<dbReference type="SUPFAM" id="SSF102114">
    <property type="entry name" value="Radical SAM enzymes"/>
    <property type="match status" value="1"/>
</dbReference>
<dbReference type="PROSITE" id="PS51918">
    <property type="entry name" value="RADICAL_SAM"/>
    <property type="match status" value="1"/>
</dbReference>